<feature type="chain" id="PRO_0000102207" description="Y' element ATP-dependent helicase YIL177C">
    <location>
        <begin position="1"/>
        <end position="1758"/>
    </location>
</feature>
<feature type="domain" description="Helicase ATP-binding" evidence="1">
    <location>
        <begin position="668"/>
        <end position="845"/>
    </location>
</feature>
<feature type="domain" description="Helicase C-terminal" evidence="2">
    <location>
        <begin position="900"/>
        <end position="1051"/>
    </location>
</feature>
<feature type="region of interest" description="Disordered" evidence="3">
    <location>
        <begin position="1142"/>
        <end position="1384"/>
    </location>
</feature>
<feature type="compositionally biased region" description="Low complexity" evidence="3">
    <location>
        <begin position="1142"/>
        <end position="1360"/>
    </location>
</feature>
<feature type="compositionally biased region" description="Basic and acidic residues" evidence="3">
    <location>
        <begin position="1361"/>
        <end position="1384"/>
    </location>
</feature>
<feature type="binding site" evidence="1">
    <location>
        <begin position="681"/>
        <end position="688"/>
    </location>
    <ligand>
        <name>ATP</name>
        <dbReference type="ChEBI" id="CHEBI:30616"/>
    </ligand>
</feature>
<proteinExistence type="evidence at transcript level"/>
<protein>
    <recommendedName>
        <fullName>Y' element ATP-dependent helicase YIL177C</fullName>
        <ecNumber evidence="5">5.6.2.-</ecNumber>
    </recommendedName>
</protein>
<accession>P40434</accession>
<accession>D6VVB6</accession>
<organism>
    <name type="scientific">Saccharomyces cerevisiae (strain ATCC 204508 / S288c)</name>
    <name type="common">Baker's yeast</name>
    <dbReference type="NCBI Taxonomy" id="559292"/>
    <lineage>
        <taxon>Eukaryota</taxon>
        <taxon>Fungi</taxon>
        <taxon>Dikarya</taxon>
        <taxon>Ascomycota</taxon>
        <taxon>Saccharomycotina</taxon>
        <taxon>Saccharomycetes</taxon>
        <taxon>Saccharomycetales</taxon>
        <taxon>Saccharomycetaceae</taxon>
        <taxon>Saccharomyces</taxon>
    </lineage>
</organism>
<sequence>MKVSDRRKFEKANFDEFESALNNKNDLVHCPSITLFESIPTEVRSFYEDEKSGLIKVVKFRTGAMDRKRSFEKVVISVMVGKNVKKFLTFVEDEPDFQGGPIPSKYLIPKKINLMVYTLFQVHTLKFNRKDYDTLSLFYLNRGYYNELSFRVLERCHEIASARPNDSSTMRTFTDFVSGAPIVRSLQKSTIRKYGYNLAPYMFLLLHVDELSIFSAYQASLPGEKKVDTERLKRDLCPRKPIEIKYFSQICNDMMNKKDRLGDILHIILRACALNFGAGPRGGAGDEEDRSITNEEPIIPSVDEHGLKVCKLRSPNTPRRLRKTLDAVKALLVSSCACTARDLDIFDDNNGVAMWKWIKILYHEVAQETTLKDSYRITLVPSSDGISLLAFAGPQRNVYVDDTTRRIQLYTDYNKNGSSEPRLKTLDGLTSDYVFYFVTVLRQMQICALGNSYDAFNHDPWMDVVGFEDPNQVTNRDISRIVLYSYMFLNTAKGCLVEYATFRQYMRELPKNAPQKLNFREMRQGLIALGRHCVGSRFETDLYESATSELMANHSVQTGRNIYGVDSFSLTSVSGTTATLLQERASERWIQWLGLESDYHCSFSSTRNAEDVVAGEAASSNHHQKISRVTRKRPREPKSTNDILVAGQKLFGSSFEFRDLHQLRLCYEIYMADTPSVAVQAPPGYGKTELFHLPLIALASKGDVEYVSFLFVPYTVLLANCMIRLGRCGCLNVAPVRNFIEEGYDGVTDLYVGIYDDLASTNFTDRIAAWENIVECTFRTNNVKLGYLIVDEFHNFETEVYRQSQFGGITNLDFDAFEKAIFLSGTAPEAVADAALQRIGLTGLAKKSMDINELKRSEDLSRGLSSYPTRMFNLIKEKSEVPLGHVHKIRKKVESQPEEALKLLLALFESEPESKAIVVASTTNEVEELACSWRKYFRVVWIHGKLGAAEKVSRTKEFVTDGSMQVLIGTKLVTEGIDIKQLMMVIMLDNRLNIIELIQGVGRLRDGGLCYLLSRKNSWAARNRKGELPPIKEGCITEQVREFYGLESKKGKKGQHVGCCGSRTDLSADTVELIERMDRLAEKQATASMSIVALPSSFQESNSSDRYRKYCSSDEDSNTCIHGSANASTNASTNAITTASTNVRTNATTNASTNATTNASTNASTNATTNASTNATTNSSTNATTTASTNVRTSATTTASINVRTSATTTESTNSSTNATTTESTNSSTNATTTESTNSNTSATTTASINVRTSATTTESTNSSTSATTTASINVRTSATTTKSINSSTNATTTESTNSNTNATTTESTNSSTNATTTESTNSSTNATTTESTNSNTSAATTESTNSNTSATTTESTNASAKEDANKDGNAEDNRFHPVTDINKESYKRKGSQMVLLERKKLKAQFPNTSENMNVLQFLGFRSDEIKHLFLYGIDIYFCPEGVFTQYGLCKGCQKMFELCVCWAGQKVSYRRIAWEALAVERMLRNDEEYKEYLEDIEPYHGDPVGYLKYFSVKRREIYSQIQRNYAWYLAITRRRETISVLDSTRGKQGSQVFRMSGRQIKELYFKVWSNLRESKTEVLQYFLNWDEKKCQEEWEAKDDTVVVEALEKGGVFQRLRSMTSAGLQGPQYVKLQFSRHHRQLRSRYELSLGMHLRDQIALGVTPSKVPHWTAFLSMLIGLFYNKTFRQKLEYLLEQISEVWLLPHWLDLANVEVLAADDTRVPLYMLMVAVHKELDSDDVPDGRFDILLCRDSSREVGE</sequence>
<comment type="function">
    <text evidence="5">Catalyzes DNA unwinding and is involved in telomerase-independent telomere maintenance.</text>
</comment>
<comment type="induction">
    <text evidence="5">Induced in absence of telomerase TLC1.</text>
</comment>
<comment type="similarity">
    <text evidence="4">Belongs to the helicase family. Yeast subtelomeric Y' repeat subfamily.</text>
</comment>
<evidence type="ECO:0000255" key="1">
    <source>
        <dbReference type="PROSITE-ProRule" id="PRU00541"/>
    </source>
</evidence>
<evidence type="ECO:0000255" key="2">
    <source>
        <dbReference type="PROSITE-ProRule" id="PRU00542"/>
    </source>
</evidence>
<evidence type="ECO:0000256" key="3">
    <source>
        <dbReference type="SAM" id="MobiDB-lite"/>
    </source>
</evidence>
<evidence type="ECO:0000305" key="4"/>
<evidence type="ECO:0000305" key="5">
    <source>
    </source>
</evidence>
<gene>
    <name type="ordered locus">YIL177C</name>
</gene>
<name>YIR7_YEAST</name>
<dbReference type="EC" id="5.6.2.-" evidence="5"/>
<dbReference type="EMBL" id="Z46921">
    <property type="protein sequence ID" value="CAA87015.1"/>
    <property type="molecule type" value="Genomic_DNA"/>
</dbReference>
<dbReference type="EMBL" id="BK006942">
    <property type="protein sequence ID" value="DAA08382.1"/>
    <property type="molecule type" value="Genomic_DNA"/>
</dbReference>
<dbReference type="RefSeq" id="NP_012092.1">
    <property type="nucleotide sequence ID" value="NM_001179522.1"/>
</dbReference>
<dbReference type="BioGRID" id="34819">
    <property type="interactions" value="8"/>
</dbReference>
<dbReference type="DIP" id="DIP-6842N"/>
<dbReference type="FunCoup" id="P40434">
    <property type="interactions" value="92"/>
</dbReference>
<dbReference type="IntAct" id="P40434">
    <property type="interactions" value="1"/>
</dbReference>
<dbReference type="MINT" id="P40434"/>
<dbReference type="STRING" id="4932.YIL177C"/>
<dbReference type="PaxDb" id="4932-YIL177C"/>
<dbReference type="PeptideAtlas" id="P40434"/>
<dbReference type="EnsemblFungi" id="YIL177C_mRNA">
    <property type="protein sequence ID" value="YIL177C"/>
    <property type="gene ID" value="YIL177C"/>
</dbReference>
<dbReference type="GeneID" id="854630"/>
<dbReference type="KEGG" id="sce:YIL177C"/>
<dbReference type="AGR" id="SGD:S000001439"/>
<dbReference type="SGD" id="S000001439">
    <property type="gene designation" value="YIL177C"/>
</dbReference>
<dbReference type="VEuPathDB" id="FungiDB:YIL177C"/>
<dbReference type="eggNOG" id="ENOG502QWCT">
    <property type="taxonomic scope" value="Eukaryota"/>
</dbReference>
<dbReference type="GeneTree" id="ENSGT00940000153173"/>
<dbReference type="HOGENOM" id="CLU_003044_2_0_1"/>
<dbReference type="InParanoid" id="P40434"/>
<dbReference type="OrthoDB" id="41776at4893"/>
<dbReference type="BioCyc" id="YEAST:G3O-31421-MONOMER"/>
<dbReference type="Reactome" id="R-SCE-5689880">
    <property type="pathway name" value="Ub-specific processing proteases"/>
</dbReference>
<dbReference type="PRO" id="PR:P40434"/>
<dbReference type="Proteomes" id="UP000002311">
    <property type="component" value="Chromosome IX"/>
</dbReference>
<dbReference type="RNAct" id="P40434">
    <property type="molecule type" value="protein"/>
</dbReference>
<dbReference type="GO" id="GO:0005737">
    <property type="term" value="C:cytoplasm"/>
    <property type="evidence" value="ECO:0000318"/>
    <property type="project" value="GO_Central"/>
</dbReference>
<dbReference type="GO" id="GO:0005524">
    <property type="term" value="F:ATP binding"/>
    <property type="evidence" value="ECO:0007669"/>
    <property type="project" value="UniProtKB-KW"/>
</dbReference>
<dbReference type="GO" id="GO:0016887">
    <property type="term" value="F:ATP hydrolysis activity"/>
    <property type="evidence" value="ECO:0007669"/>
    <property type="project" value="RHEA"/>
</dbReference>
<dbReference type="GO" id="GO:0004386">
    <property type="term" value="F:helicase activity"/>
    <property type="evidence" value="ECO:0000250"/>
    <property type="project" value="SGD"/>
</dbReference>
<dbReference type="GO" id="GO:0003676">
    <property type="term" value="F:nucleic acid binding"/>
    <property type="evidence" value="ECO:0007669"/>
    <property type="project" value="InterPro"/>
</dbReference>
<dbReference type="GO" id="GO:0000722">
    <property type="term" value="P:telomere maintenance via recombination"/>
    <property type="evidence" value="ECO:0007669"/>
    <property type="project" value="UniProtKB-ARBA"/>
</dbReference>
<dbReference type="CDD" id="cd18785">
    <property type="entry name" value="SF2_C"/>
    <property type="match status" value="1"/>
</dbReference>
<dbReference type="FunFam" id="3.40.50.300:FF:001914">
    <property type="entry name" value="YML133C-like protein"/>
    <property type="match status" value="1"/>
</dbReference>
<dbReference type="FunFam" id="3.40.50.300:FF:002410">
    <property type="entry name" value="YML133C-like protein"/>
    <property type="match status" value="1"/>
</dbReference>
<dbReference type="Gene3D" id="3.40.50.300">
    <property type="entry name" value="P-loop containing nucleotide triphosphate hydrolases"/>
    <property type="match status" value="1"/>
</dbReference>
<dbReference type="InterPro" id="IPR011545">
    <property type="entry name" value="DEAD/DEAH_box_helicase_dom"/>
</dbReference>
<dbReference type="InterPro" id="IPR014001">
    <property type="entry name" value="Helicase_ATP-bd"/>
</dbReference>
<dbReference type="InterPro" id="IPR001650">
    <property type="entry name" value="Helicase_C-like"/>
</dbReference>
<dbReference type="InterPro" id="IPR027417">
    <property type="entry name" value="P-loop_NTPase"/>
</dbReference>
<dbReference type="InterPro" id="IPR021646">
    <property type="entry name" value="Sir1_ORC-binding"/>
</dbReference>
<dbReference type="InterPro" id="IPR050978">
    <property type="entry name" value="Y'_ATP-dependent_helicase"/>
</dbReference>
<dbReference type="PANTHER" id="PTHR31583">
    <property type="match status" value="1"/>
</dbReference>
<dbReference type="PANTHER" id="PTHR31583:SF2">
    <property type="match status" value="1"/>
</dbReference>
<dbReference type="Pfam" id="PF00270">
    <property type="entry name" value="DEAD"/>
    <property type="match status" value="1"/>
</dbReference>
<dbReference type="Pfam" id="PF00271">
    <property type="entry name" value="Helicase_C"/>
    <property type="match status" value="1"/>
</dbReference>
<dbReference type="Pfam" id="PF11603">
    <property type="entry name" value="Sir1"/>
    <property type="match status" value="1"/>
</dbReference>
<dbReference type="SMART" id="SM00487">
    <property type="entry name" value="DEXDc"/>
    <property type="match status" value="1"/>
</dbReference>
<dbReference type="SMART" id="SM00490">
    <property type="entry name" value="HELICc"/>
    <property type="match status" value="1"/>
</dbReference>
<dbReference type="SUPFAM" id="SSF52540">
    <property type="entry name" value="P-loop containing nucleoside triphosphate hydrolases"/>
    <property type="match status" value="1"/>
</dbReference>
<dbReference type="PROSITE" id="PS51192">
    <property type="entry name" value="HELICASE_ATP_BIND_1"/>
    <property type="match status" value="1"/>
</dbReference>
<dbReference type="PROSITE" id="PS51194">
    <property type="entry name" value="HELICASE_CTER"/>
    <property type="match status" value="1"/>
</dbReference>
<reference key="1">
    <citation type="journal article" date="1997" name="Nature">
        <title>The nucleotide sequence of Saccharomyces cerevisiae chromosome IX.</title>
        <authorList>
            <person name="Churcher C.M."/>
            <person name="Bowman S."/>
            <person name="Badcock K."/>
            <person name="Bankier A.T."/>
            <person name="Brown D."/>
            <person name="Chillingworth T."/>
            <person name="Connor R."/>
            <person name="Devlin K."/>
            <person name="Gentles S."/>
            <person name="Hamlin N."/>
            <person name="Harris D.E."/>
            <person name="Horsnell T."/>
            <person name="Hunt S."/>
            <person name="Jagels K."/>
            <person name="Jones M."/>
            <person name="Lye G."/>
            <person name="Moule S."/>
            <person name="Odell C."/>
            <person name="Pearson D."/>
            <person name="Rajandream M.A."/>
            <person name="Rice P."/>
            <person name="Rowley N."/>
            <person name="Skelton J."/>
            <person name="Smith V."/>
            <person name="Walsh S.V."/>
            <person name="Whitehead S."/>
            <person name="Barrell B.G."/>
        </authorList>
    </citation>
    <scope>NUCLEOTIDE SEQUENCE [LARGE SCALE GENOMIC DNA]</scope>
    <source>
        <strain>ATCC 204508 / S288c</strain>
    </source>
</reference>
<reference key="2">
    <citation type="journal article" date="2014" name="G3 (Bethesda)">
        <title>The reference genome sequence of Saccharomyces cerevisiae: Then and now.</title>
        <authorList>
            <person name="Engel S.R."/>
            <person name="Dietrich F.S."/>
            <person name="Fisk D.G."/>
            <person name="Binkley G."/>
            <person name="Balakrishnan R."/>
            <person name="Costanzo M.C."/>
            <person name="Dwight S.S."/>
            <person name="Hitz B.C."/>
            <person name="Karra K."/>
            <person name="Nash R.S."/>
            <person name="Weng S."/>
            <person name="Wong E.D."/>
            <person name="Lloyd P."/>
            <person name="Skrzypek M.S."/>
            <person name="Miyasato S.R."/>
            <person name="Simison M."/>
            <person name="Cherry J.M."/>
        </authorList>
    </citation>
    <scope>GENOME REANNOTATION</scope>
    <source>
        <strain>ATCC 204508 / S288c</strain>
    </source>
</reference>
<reference key="3">
    <citation type="journal article" date="1998" name="J. Biol. Chem.">
        <title>Y'-Help1, a DNA helicase encoded by the yeast subtelomeric Y' element, is induced in survivors defective for telomerase.</title>
        <authorList>
            <person name="Yamada M."/>
            <person name="Hayatsu N."/>
            <person name="Matsuura A."/>
            <person name="Ishikawa F."/>
        </authorList>
    </citation>
    <scope>FUNCTION</scope>
    <scope>INDUCTION</scope>
</reference>
<keyword id="KW-0067">ATP-binding</keyword>
<keyword id="KW-0347">Helicase</keyword>
<keyword id="KW-0378">Hydrolase</keyword>
<keyword id="KW-0413">Isomerase</keyword>
<keyword id="KW-0547">Nucleotide-binding</keyword>
<keyword id="KW-1185">Reference proteome</keyword>
<keyword id="KW-0677">Repeat</keyword>